<gene>
    <name evidence="1" type="primary">dcyD</name>
    <name type="ordered locus">YE2517</name>
</gene>
<organism>
    <name type="scientific">Yersinia enterocolitica serotype O:8 / biotype 1B (strain NCTC 13174 / 8081)</name>
    <dbReference type="NCBI Taxonomy" id="393305"/>
    <lineage>
        <taxon>Bacteria</taxon>
        <taxon>Pseudomonadati</taxon>
        <taxon>Pseudomonadota</taxon>
        <taxon>Gammaproteobacteria</taxon>
        <taxon>Enterobacterales</taxon>
        <taxon>Yersiniaceae</taxon>
        <taxon>Yersinia</taxon>
    </lineage>
</organism>
<proteinExistence type="inferred from homology"/>
<feature type="chain" id="PRO_1000064269" description="D-cysteine desulfhydrase">
    <location>
        <begin position="1"/>
        <end position="330"/>
    </location>
</feature>
<feature type="modified residue" description="N6-(pyridoxal phosphate)lysine" evidence="1">
    <location>
        <position position="52"/>
    </location>
</feature>
<reference key="1">
    <citation type="journal article" date="2006" name="PLoS Genet.">
        <title>The complete genome sequence and comparative genome analysis of the high pathogenicity Yersinia enterocolitica strain 8081.</title>
        <authorList>
            <person name="Thomson N.R."/>
            <person name="Howard S."/>
            <person name="Wren B.W."/>
            <person name="Holden M.T.G."/>
            <person name="Crossman L."/>
            <person name="Challis G.L."/>
            <person name="Churcher C."/>
            <person name="Mungall K."/>
            <person name="Brooks K."/>
            <person name="Chillingworth T."/>
            <person name="Feltwell T."/>
            <person name="Abdellah Z."/>
            <person name="Hauser H."/>
            <person name="Jagels K."/>
            <person name="Maddison M."/>
            <person name="Moule S."/>
            <person name="Sanders M."/>
            <person name="Whitehead S."/>
            <person name="Quail M.A."/>
            <person name="Dougan G."/>
            <person name="Parkhill J."/>
            <person name="Prentice M.B."/>
        </authorList>
    </citation>
    <scope>NUCLEOTIDE SEQUENCE [LARGE SCALE GENOMIC DNA]</scope>
    <source>
        <strain>NCTC 13174 / 8081</strain>
    </source>
</reference>
<sequence length="330" mass="35196">MTLQHKLAQFPRLDLVGNATPLEKLSRLSDYLGREIYIKRDDVTPLALGGNKLRKLEFLAADALRQGADTLVTAGAIQSNHVRQTAAVAAKLGLHCVALLENPIGTSQENYLTNGNRLLLDLFNVEVVMCDGLHDPNQQLAELATRIEAQGFRPYVVPVGGSNAFGALGYVQCALEIAAQSAGNVTFSSVVVASGSAGTHAGLAVGLQQLLPQTELIGVTVSRKAEEQRPKVIHIQQELATSLGVTSGPADITLWDDYFAPQYGMPNEEGLAAIGLLARLEGILLDPVYTGKAMAGLLDGLEQKKFRDDGPILFIHTGGAPALFAYHPQV</sequence>
<accession>A1JSN4</accession>
<comment type="function">
    <text evidence="1">Catalyzes the alpha,beta-elimination reaction of D-cysteine and of several D-cysteine derivatives. It could be a defense mechanism against D-cysteine.</text>
</comment>
<comment type="catalytic activity">
    <reaction evidence="1">
        <text>D-cysteine + H2O = hydrogen sulfide + pyruvate + NH4(+) + H(+)</text>
        <dbReference type="Rhea" id="RHEA:11268"/>
        <dbReference type="ChEBI" id="CHEBI:15361"/>
        <dbReference type="ChEBI" id="CHEBI:15377"/>
        <dbReference type="ChEBI" id="CHEBI:15378"/>
        <dbReference type="ChEBI" id="CHEBI:28938"/>
        <dbReference type="ChEBI" id="CHEBI:29919"/>
        <dbReference type="ChEBI" id="CHEBI:35236"/>
        <dbReference type="EC" id="4.4.1.15"/>
    </reaction>
</comment>
<comment type="cofactor">
    <cofactor evidence="1">
        <name>pyridoxal 5'-phosphate</name>
        <dbReference type="ChEBI" id="CHEBI:597326"/>
    </cofactor>
</comment>
<comment type="subunit">
    <text evidence="1">Homodimer.</text>
</comment>
<comment type="similarity">
    <text evidence="1">Belongs to the ACC deaminase/D-cysteine desulfhydrase family.</text>
</comment>
<dbReference type="EC" id="4.4.1.15" evidence="1"/>
<dbReference type="EMBL" id="AM286415">
    <property type="protein sequence ID" value="CAL12560.1"/>
    <property type="molecule type" value="Genomic_DNA"/>
</dbReference>
<dbReference type="RefSeq" id="WP_011816587.1">
    <property type="nucleotide sequence ID" value="NC_008800.1"/>
</dbReference>
<dbReference type="RefSeq" id="YP_001006724.1">
    <property type="nucleotide sequence ID" value="NC_008800.1"/>
</dbReference>
<dbReference type="SMR" id="A1JSN4"/>
<dbReference type="KEGG" id="yen:YE2517"/>
<dbReference type="PATRIC" id="fig|393305.7.peg.2671"/>
<dbReference type="eggNOG" id="COG2515">
    <property type="taxonomic scope" value="Bacteria"/>
</dbReference>
<dbReference type="HOGENOM" id="CLU_048897_1_0_6"/>
<dbReference type="OrthoDB" id="9801249at2"/>
<dbReference type="Proteomes" id="UP000000642">
    <property type="component" value="Chromosome"/>
</dbReference>
<dbReference type="GO" id="GO:0019148">
    <property type="term" value="F:D-cysteine desulfhydrase activity"/>
    <property type="evidence" value="ECO:0007669"/>
    <property type="project" value="UniProtKB-UniRule"/>
</dbReference>
<dbReference type="GO" id="GO:0046416">
    <property type="term" value="P:D-amino acid metabolic process"/>
    <property type="evidence" value="ECO:0007669"/>
    <property type="project" value="UniProtKB-UniRule"/>
</dbReference>
<dbReference type="CDD" id="cd06449">
    <property type="entry name" value="ACCD"/>
    <property type="match status" value="1"/>
</dbReference>
<dbReference type="FunFam" id="3.40.50.1100:FF:000017">
    <property type="entry name" value="D-cysteine desulfhydrase"/>
    <property type="match status" value="1"/>
</dbReference>
<dbReference type="Gene3D" id="3.40.50.1100">
    <property type="match status" value="2"/>
</dbReference>
<dbReference type="HAMAP" id="MF_01045">
    <property type="entry name" value="D_Cys_desulfhydr"/>
    <property type="match status" value="1"/>
</dbReference>
<dbReference type="InterPro" id="IPR027278">
    <property type="entry name" value="ACCD_DCysDesulf"/>
</dbReference>
<dbReference type="InterPro" id="IPR005966">
    <property type="entry name" value="D-Cys_desShydrase"/>
</dbReference>
<dbReference type="InterPro" id="IPR023702">
    <property type="entry name" value="D_Cys_desulphydr_bac"/>
</dbReference>
<dbReference type="InterPro" id="IPR001926">
    <property type="entry name" value="TrpB-like_PALP"/>
</dbReference>
<dbReference type="InterPro" id="IPR036052">
    <property type="entry name" value="TrpB-like_PALP_sf"/>
</dbReference>
<dbReference type="NCBIfam" id="TIGR01275">
    <property type="entry name" value="ACC_deam_rel"/>
    <property type="match status" value="1"/>
</dbReference>
<dbReference type="NCBIfam" id="NF003030">
    <property type="entry name" value="PRK03910.1-3"/>
    <property type="match status" value="1"/>
</dbReference>
<dbReference type="NCBIfam" id="NF003032">
    <property type="entry name" value="PRK03910.1-5"/>
    <property type="match status" value="1"/>
</dbReference>
<dbReference type="PANTHER" id="PTHR43780">
    <property type="entry name" value="1-AMINOCYCLOPROPANE-1-CARBOXYLATE DEAMINASE-RELATED"/>
    <property type="match status" value="1"/>
</dbReference>
<dbReference type="PANTHER" id="PTHR43780:SF2">
    <property type="entry name" value="1-AMINOCYCLOPROPANE-1-CARBOXYLATE DEAMINASE-RELATED"/>
    <property type="match status" value="1"/>
</dbReference>
<dbReference type="Pfam" id="PF00291">
    <property type="entry name" value="PALP"/>
    <property type="match status" value="1"/>
</dbReference>
<dbReference type="PIRSF" id="PIRSF006278">
    <property type="entry name" value="ACCD_DCysDesulf"/>
    <property type="match status" value="1"/>
</dbReference>
<dbReference type="SUPFAM" id="SSF53686">
    <property type="entry name" value="Tryptophan synthase beta subunit-like PLP-dependent enzymes"/>
    <property type="match status" value="1"/>
</dbReference>
<protein>
    <recommendedName>
        <fullName evidence="1">D-cysteine desulfhydrase</fullName>
        <ecNumber evidence="1">4.4.1.15</ecNumber>
    </recommendedName>
</protein>
<evidence type="ECO:0000255" key="1">
    <source>
        <dbReference type="HAMAP-Rule" id="MF_01045"/>
    </source>
</evidence>
<keyword id="KW-0456">Lyase</keyword>
<keyword id="KW-0663">Pyridoxal phosphate</keyword>
<name>DCYD_YERE8</name>